<comment type="function">
    <text evidence="1 3">Extracellular aminopeptidase which contributes to pathogenicity.</text>
</comment>
<comment type="cofactor">
    <cofactor evidence="1">
        <name>Zn(2+)</name>
        <dbReference type="ChEBI" id="CHEBI:29105"/>
    </cofactor>
    <text evidence="1">Binds 2 Zn(2+) ions per subunit.</text>
</comment>
<comment type="activity regulation">
    <text evidence="3">Activity is inhibited by EDTA, o-phenanthroline, bestatin and amastatin.</text>
</comment>
<comment type="biophysicochemical properties">
    <phDependence>
        <text evidence="3">Optimum pH is 7.0.</text>
    </phDependence>
    <temperatureDependence>
        <text evidence="3">Optimum temperatures are ranging from 40 to 50 degrees Celsius.</text>
    </temperatureDependence>
</comment>
<comment type="subunit">
    <text evidence="1">Monomer.</text>
</comment>
<comment type="subcellular location">
    <subcellularLocation>
        <location evidence="3">Secreted</location>
    </subcellularLocation>
</comment>
<comment type="induction">
    <text evidence="4">Expression is strongly increased during growth on protein-rich medium. Expressed at even higher levels when keratin is present in the protein-rich medium.</text>
</comment>
<comment type="similarity">
    <text evidence="5">Belongs to the peptidase M28 family. M28E subfamily.</text>
</comment>
<accession>Q5QHG5</accession>
<organism>
    <name type="scientific">Trichophyton rubrum</name>
    <name type="common">Athlete's foot fungus</name>
    <name type="synonym">Epidermophyton rubrum</name>
    <dbReference type="NCBI Taxonomy" id="5551"/>
    <lineage>
        <taxon>Eukaryota</taxon>
        <taxon>Fungi</taxon>
        <taxon>Dikarya</taxon>
        <taxon>Ascomycota</taxon>
        <taxon>Pezizomycotina</taxon>
        <taxon>Eurotiomycetes</taxon>
        <taxon>Eurotiomycetidae</taxon>
        <taxon>Onygenales</taxon>
        <taxon>Arthrodermataceae</taxon>
        <taxon>Trichophyton</taxon>
    </lineage>
</organism>
<feature type="signal peptide" evidence="2">
    <location>
        <begin position="1"/>
        <end position="18"/>
    </location>
</feature>
<feature type="chain" id="PRO_0000384100" description="Leucine aminopeptidase 1">
    <location>
        <begin position="19"/>
        <end position="373"/>
    </location>
</feature>
<feature type="binding site" evidence="1">
    <location>
        <position position="176"/>
    </location>
    <ligand>
        <name>Zn(2+)</name>
        <dbReference type="ChEBI" id="CHEBI:29105"/>
        <label>1</label>
    </ligand>
</feature>
<feature type="binding site" evidence="1">
    <location>
        <position position="195"/>
    </location>
    <ligand>
        <name>Zn(2+)</name>
        <dbReference type="ChEBI" id="CHEBI:29105"/>
        <label>1</label>
    </ligand>
</feature>
<feature type="binding site" evidence="1">
    <location>
        <position position="195"/>
    </location>
    <ligand>
        <name>Zn(2+)</name>
        <dbReference type="ChEBI" id="CHEBI:29105"/>
        <label>2</label>
        <note>catalytic</note>
    </ligand>
</feature>
<feature type="binding site" evidence="1">
    <location>
        <position position="234"/>
    </location>
    <ligand>
        <name>Zn(2+)</name>
        <dbReference type="ChEBI" id="CHEBI:29105"/>
        <label>2</label>
        <note>catalytic</note>
    </ligand>
</feature>
<feature type="binding site" evidence="1">
    <location>
        <position position="261"/>
    </location>
    <ligand>
        <name>Zn(2+)</name>
        <dbReference type="ChEBI" id="CHEBI:29105"/>
        <label>1</label>
    </ligand>
</feature>
<feature type="binding site" evidence="1">
    <location>
        <position position="343"/>
    </location>
    <ligand>
        <name>Zn(2+)</name>
        <dbReference type="ChEBI" id="CHEBI:29105"/>
        <label>2</label>
        <note>catalytic</note>
    </ligand>
</feature>
<feature type="glycosylation site" description="N-linked (GlcNAc...) asparagine" evidence="2">
    <location>
        <position position="196"/>
    </location>
</feature>
<feature type="glycosylation site" description="N-linked (GlcNAc...) asparagine" evidence="2">
    <location>
        <position position="288"/>
    </location>
</feature>
<feature type="glycosylation site" description="N-linked (GlcNAc...) asparagine" evidence="2">
    <location>
        <position position="348"/>
    </location>
</feature>
<feature type="disulfide bond" evidence="1">
    <location>
        <begin position="310"/>
        <end position="314"/>
    </location>
</feature>
<proteinExistence type="evidence at protein level"/>
<protein>
    <recommendedName>
        <fullName>Leucine aminopeptidase 1</fullName>
        <ecNumber>3.4.11.-</ecNumber>
    </recommendedName>
    <alternativeName>
        <fullName>Leucyl aminopeptidase 1</fullName>
        <shortName>LAP1</shortName>
    </alternativeName>
</protein>
<dbReference type="EC" id="3.4.11.-"/>
<dbReference type="EMBL" id="AY496930">
    <property type="protein sequence ID" value="AAS76670.1"/>
    <property type="molecule type" value="Genomic_DNA"/>
</dbReference>
<dbReference type="SMR" id="Q5QHG5"/>
<dbReference type="MEROPS" id="M28.022"/>
<dbReference type="GlyCosmos" id="Q5QHG5">
    <property type="glycosylation" value="3 sites, No reported glycans"/>
</dbReference>
<dbReference type="VEuPathDB" id="FungiDB:TERG_05652"/>
<dbReference type="GO" id="GO:0005576">
    <property type="term" value="C:extracellular region"/>
    <property type="evidence" value="ECO:0007669"/>
    <property type="project" value="UniProtKB-SubCell"/>
</dbReference>
<dbReference type="GO" id="GO:0004177">
    <property type="term" value="F:aminopeptidase activity"/>
    <property type="evidence" value="ECO:0007669"/>
    <property type="project" value="UniProtKB-KW"/>
</dbReference>
<dbReference type="GO" id="GO:0046872">
    <property type="term" value="F:metal ion binding"/>
    <property type="evidence" value="ECO:0007669"/>
    <property type="project" value="UniProtKB-KW"/>
</dbReference>
<dbReference type="GO" id="GO:0008235">
    <property type="term" value="F:metalloexopeptidase activity"/>
    <property type="evidence" value="ECO:0007669"/>
    <property type="project" value="InterPro"/>
</dbReference>
<dbReference type="GO" id="GO:0006508">
    <property type="term" value="P:proteolysis"/>
    <property type="evidence" value="ECO:0007669"/>
    <property type="project" value="UniProtKB-KW"/>
</dbReference>
<dbReference type="CDD" id="cd03879">
    <property type="entry name" value="M28_AAP"/>
    <property type="match status" value="1"/>
</dbReference>
<dbReference type="FunFam" id="3.40.630.10:FF:000042">
    <property type="entry name" value="Peptide hydrolase"/>
    <property type="match status" value="1"/>
</dbReference>
<dbReference type="Gene3D" id="3.40.630.10">
    <property type="entry name" value="Zn peptidases"/>
    <property type="match status" value="1"/>
</dbReference>
<dbReference type="InterPro" id="IPR045175">
    <property type="entry name" value="M28_fam"/>
</dbReference>
<dbReference type="InterPro" id="IPR007484">
    <property type="entry name" value="Peptidase_M28"/>
</dbReference>
<dbReference type="PANTHER" id="PTHR12147:SF56">
    <property type="entry name" value="AMINOPEPTIDASE YDR415C-RELATED"/>
    <property type="match status" value="1"/>
</dbReference>
<dbReference type="PANTHER" id="PTHR12147">
    <property type="entry name" value="METALLOPEPTIDASE M28 FAMILY MEMBER"/>
    <property type="match status" value="1"/>
</dbReference>
<dbReference type="Pfam" id="PF04389">
    <property type="entry name" value="Peptidase_M28"/>
    <property type="match status" value="1"/>
</dbReference>
<dbReference type="SUPFAM" id="SSF53187">
    <property type="entry name" value="Zn-dependent exopeptidases"/>
    <property type="match status" value="1"/>
</dbReference>
<reference key="1">
    <citation type="journal article" date="2005" name="Microbiology">
        <title>Aminopeptidases and dipeptidyl-peptidases secreted by the dermatophyte Trichophyton rubrum.</title>
        <authorList>
            <person name="Monod M."/>
            <person name="Lechenne B."/>
            <person name="Jousson O."/>
            <person name="Grand D."/>
            <person name="Zaugg C."/>
            <person name="Stoecklin R."/>
            <person name="Grouzmann E."/>
        </authorList>
    </citation>
    <scope>NUCLEOTIDE SEQUENCE [GENOMIC DNA]</scope>
    <scope>SUBCELLULAR LOCATION</scope>
    <scope>FUNCTION</scope>
    <scope>ACTIVITY REGULATION</scope>
    <scope>BIOPHYSICOCHEMICAL PROPERTIES</scope>
</reference>
<reference key="2">
    <citation type="journal article" date="2009" name="Eukaryot. Cell">
        <title>Gene expression profiling in the human pathogenic dermatophyte Trichophyton rubrum during growth on proteins.</title>
        <authorList>
            <person name="Zaugg C."/>
            <person name="Monod M."/>
            <person name="Weber J."/>
            <person name="Harshman K."/>
            <person name="Pradervand S."/>
            <person name="Thomas J."/>
            <person name="Bueno M."/>
            <person name="Giddey K."/>
            <person name="Staib P."/>
        </authorList>
    </citation>
    <scope>INDUCTION</scope>
</reference>
<keyword id="KW-0031">Aminopeptidase</keyword>
<keyword id="KW-1015">Disulfide bond</keyword>
<keyword id="KW-0325">Glycoprotein</keyword>
<keyword id="KW-0378">Hydrolase</keyword>
<keyword id="KW-0479">Metal-binding</keyword>
<keyword id="KW-0645">Protease</keyword>
<keyword id="KW-0964">Secreted</keyword>
<keyword id="KW-0732">Signal</keyword>
<keyword id="KW-0843">Virulence</keyword>
<keyword id="KW-0862">Zinc</keyword>
<gene>
    <name type="primary">LAP1</name>
</gene>
<evidence type="ECO:0000250" key="1"/>
<evidence type="ECO:0000255" key="2"/>
<evidence type="ECO:0000269" key="3">
    <source>
    </source>
</evidence>
<evidence type="ECO:0000269" key="4">
    <source>
    </source>
</evidence>
<evidence type="ECO:0000305" key="5"/>
<name>LAP1_TRIRU</name>
<sequence length="373" mass="40635">MKLLSVLALSATATSVLGASIPVDARAEKFLIELAPGETRWVTEEEKWELKRKGQDFFDITDEEVGFTAAVAQPAIAYPTSIRHANAVNAMIATLSKENMQRDLTKLSSFQTAYYKVDFGKQSATWLQEQVQAAINTAGANRYGAKVASFRHNFAQHSIIATIPGRSPEVVVVGAHQDSINQRSPMTGRAPGADDNGSGSVTILEALRGVLRDQTILQGKAANTIEFHWYAGEEAGLLGSQAIFANYKQTGKKVKGMLNQDMTGYIKGMVDKGLKVSFGIITDNVNANLTKFVRMVITKYCSIPTIDTRCGYACSDHASANRNGYPSAMVAESPIDLLDPHLHTDSDNISYLDFDHMIEHAKLIVGFVTELAK</sequence>